<dbReference type="EMBL" id="CP000961">
    <property type="protein sequence ID" value="ACA85673.1"/>
    <property type="molecule type" value="Genomic_DNA"/>
</dbReference>
<dbReference type="RefSeq" id="WP_012324019.1">
    <property type="nucleotide sequence ID" value="NC_010506.1"/>
</dbReference>
<dbReference type="SMR" id="B1KJK0"/>
<dbReference type="STRING" id="392500.Swoo_1381"/>
<dbReference type="KEGG" id="swd:Swoo_1381"/>
<dbReference type="eggNOG" id="COG1327">
    <property type="taxonomic scope" value="Bacteria"/>
</dbReference>
<dbReference type="HOGENOM" id="CLU_108412_0_0_6"/>
<dbReference type="Proteomes" id="UP000002168">
    <property type="component" value="Chromosome"/>
</dbReference>
<dbReference type="GO" id="GO:0005524">
    <property type="term" value="F:ATP binding"/>
    <property type="evidence" value="ECO:0007669"/>
    <property type="project" value="UniProtKB-KW"/>
</dbReference>
<dbReference type="GO" id="GO:0003677">
    <property type="term" value="F:DNA binding"/>
    <property type="evidence" value="ECO:0007669"/>
    <property type="project" value="UniProtKB-KW"/>
</dbReference>
<dbReference type="GO" id="GO:0008270">
    <property type="term" value="F:zinc ion binding"/>
    <property type="evidence" value="ECO:0007669"/>
    <property type="project" value="UniProtKB-UniRule"/>
</dbReference>
<dbReference type="GO" id="GO:0045892">
    <property type="term" value="P:negative regulation of DNA-templated transcription"/>
    <property type="evidence" value="ECO:0007669"/>
    <property type="project" value="UniProtKB-UniRule"/>
</dbReference>
<dbReference type="HAMAP" id="MF_00440">
    <property type="entry name" value="NrdR"/>
    <property type="match status" value="1"/>
</dbReference>
<dbReference type="InterPro" id="IPR005144">
    <property type="entry name" value="ATP-cone_dom"/>
</dbReference>
<dbReference type="InterPro" id="IPR055173">
    <property type="entry name" value="NrdR-like_N"/>
</dbReference>
<dbReference type="InterPro" id="IPR003796">
    <property type="entry name" value="RNR_NrdR-like"/>
</dbReference>
<dbReference type="NCBIfam" id="TIGR00244">
    <property type="entry name" value="transcriptional regulator NrdR"/>
    <property type="match status" value="1"/>
</dbReference>
<dbReference type="PANTHER" id="PTHR30455">
    <property type="entry name" value="TRANSCRIPTIONAL REPRESSOR NRDR"/>
    <property type="match status" value="1"/>
</dbReference>
<dbReference type="PANTHER" id="PTHR30455:SF2">
    <property type="entry name" value="TRANSCRIPTIONAL REPRESSOR NRDR"/>
    <property type="match status" value="1"/>
</dbReference>
<dbReference type="Pfam" id="PF03477">
    <property type="entry name" value="ATP-cone"/>
    <property type="match status" value="1"/>
</dbReference>
<dbReference type="Pfam" id="PF22811">
    <property type="entry name" value="Zn_ribbon_NrdR"/>
    <property type="match status" value="1"/>
</dbReference>
<dbReference type="PROSITE" id="PS51161">
    <property type="entry name" value="ATP_CONE"/>
    <property type="match status" value="1"/>
</dbReference>
<sequence length="149" mass="17041">MHCPFCSATDTKVIDSRLVADGHQVRRRRECAECHERFTTFEGAELVMPRVVKQDGSRQPFDEEKLRGGMLRAVEKRPVSMDQIEQALTKIKSTLRGTGEREIKSEMIGNLMMEQLVNLDKVAYIRFASVYRAFEDVSEFGDAIAKLQK</sequence>
<organism>
    <name type="scientific">Shewanella woodyi (strain ATCC 51908 / MS32)</name>
    <dbReference type="NCBI Taxonomy" id="392500"/>
    <lineage>
        <taxon>Bacteria</taxon>
        <taxon>Pseudomonadati</taxon>
        <taxon>Pseudomonadota</taxon>
        <taxon>Gammaproteobacteria</taxon>
        <taxon>Alteromonadales</taxon>
        <taxon>Shewanellaceae</taxon>
        <taxon>Shewanella</taxon>
    </lineage>
</organism>
<name>NRDR_SHEWM</name>
<feature type="chain" id="PRO_1000124549" description="Transcriptional repressor NrdR">
    <location>
        <begin position="1"/>
        <end position="149"/>
    </location>
</feature>
<feature type="domain" description="ATP-cone" evidence="1">
    <location>
        <begin position="49"/>
        <end position="139"/>
    </location>
</feature>
<feature type="zinc finger region" evidence="1">
    <location>
        <begin position="3"/>
        <end position="34"/>
    </location>
</feature>
<gene>
    <name evidence="1" type="primary">nrdR</name>
    <name type="ordered locus">Swoo_1381</name>
</gene>
<reference key="1">
    <citation type="submission" date="2008-02" db="EMBL/GenBank/DDBJ databases">
        <title>Complete sequence of Shewanella woodyi ATCC 51908.</title>
        <authorList>
            <consortium name="US DOE Joint Genome Institute"/>
            <person name="Copeland A."/>
            <person name="Lucas S."/>
            <person name="Lapidus A."/>
            <person name="Glavina del Rio T."/>
            <person name="Dalin E."/>
            <person name="Tice H."/>
            <person name="Bruce D."/>
            <person name="Goodwin L."/>
            <person name="Pitluck S."/>
            <person name="Sims D."/>
            <person name="Brettin T."/>
            <person name="Detter J.C."/>
            <person name="Han C."/>
            <person name="Kuske C.R."/>
            <person name="Schmutz J."/>
            <person name="Larimer F."/>
            <person name="Land M."/>
            <person name="Hauser L."/>
            <person name="Kyrpides N."/>
            <person name="Lykidis A."/>
            <person name="Zhao J.-S."/>
            <person name="Richardson P."/>
        </authorList>
    </citation>
    <scope>NUCLEOTIDE SEQUENCE [LARGE SCALE GENOMIC DNA]</scope>
    <source>
        <strain>ATCC 51908 / MS32</strain>
    </source>
</reference>
<evidence type="ECO:0000255" key="1">
    <source>
        <dbReference type="HAMAP-Rule" id="MF_00440"/>
    </source>
</evidence>
<protein>
    <recommendedName>
        <fullName evidence="1">Transcriptional repressor NrdR</fullName>
    </recommendedName>
</protein>
<keyword id="KW-0067">ATP-binding</keyword>
<keyword id="KW-0238">DNA-binding</keyword>
<keyword id="KW-0479">Metal-binding</keyword>
<keyword id="KW-0547">Nucleotide-binding</keyword>
<keyword id="KW-1185">Reference proteome</keyword>
<keyword id="KW-0678">Repressor</keyword>
<keyword id="KW-0804">Transcription</keyword>
<keyword id="KW-0805">Transcription regulation</keyword>
<keyword id="KW-0862">Zinc</keyword>
<keyword id="KW-0863">Zinc-finger</keyword>
<comment type="function">
    <text evidence="1">Negatively regulates transcription of bacterial ribonucleotide reductase nrd genes and operons by binding to NrdR-boxes.</text>
</comment>
<comment type="cofactor">
    <cofactor evidence="1">
        <name>Zn(2+)</name>
        <dbReference type="ChEBI" id="CHEBI:29105"/>
    </cofactor>
    <text evidence="1">Binds 1 zinc ion.</text>
</comment>
<comment type="similarity">
    <text evidence="1">Belongs to the NrdR family.</text>
</comment>
<accession>B1KJK0</accession>
<proteinExistence type="inferred from homology"/>